<reference key="1">
    <citation type="submission" date="2006-05" db="EMBL/GenBank/DDBJ databases">
        <title>Complete sequence of chromosome of Silicibacter sp. TM1040.</title>
        <authorList>
            <consortium name="US DOE Joint Genome Institute"/>
            <person name="Copeland A."/>
            <person name="Lucas S."/>
            <person name="Lapidus A."/>
            <person name="Barry K."/>
            <person name="Detter J.C."/>
            <person name="Glavina del Rio T."/>
            <person name="Hammon N."/>
            <person name="Israni S."/>
            <person name="Dalin E."/>
            <person name="Tice H."/>
            <person name="Pitluck S."/>
            <person name="Brettin T."/>
            <person name="Bruce D."/>
            <person name="Han C."/>
            <person name="Tapia R."/>
            <person name="Goodwin L."/>
            <person name="Thompson L.S."/>
            <person name="Gilna P."/>
            <person name="Schmutz J."/>
            <person name="Larimer F."/>
            <person name="Land M."/>
            <person name="Hauser L."/>
            <person name="Kyrpides N."/>
            <person name="Kim E."/>
            <person name="Belas R."/>
            <person name="Moran M.A."/>
            <person name="Buchan A."/>
            <person name="Gonzalez J.M."/>
            <person name="Schell M.A."/>
            <person name="Sun F."/>
            <person name="Richardson P."/>
        </authorList>
    </citation>
    <scope>NUCLEOTIDE SEQUENCE [LARGE SCALE GENOMIC DNA]</scope>
    <source>
        <strain>TM1040</strain>
    </source>
</reference>
<name>LFTR_RUEST</name>
<evidence type="ECO:0000255" key="1">
    <source>
        <dbReference type="HAMAP-Rule" id="MF_00688"/>
    </source>
</evidence>
<gene>
    <name evidence="1" type="primary">aat</name>
    <name type="ordered locus">TM1040_1519</name>
</gene>
<keyword id="KW-0012">Acyltransferase</keyword>
<keyword id="KW-0963">Cytoplasm</keyword>
<keyword id="KW-1185">Reference proteome</keyword>
<keyword id="KW-0808">Transferase</keyword>
<comment type="function">
    <text evidence="1">Functions in the N-end rule pathway of protein degradation where it conjugates Leu, Phe and, less efficiently, Met from aminoacyl-tRNAs to the N-termini of proteins containing an N-terminal arginine or lysine.</text>
</comment>
<comment type="catalytic activity">
    <reaction evidence="1">
        <text>N-terminal L-lysyl-[protein] + L-leucyl-tRNA(Leu) = N-terminal L-leucyl-L-lysyl-[protein] + tRNA(Leu) + H(+)</text>
        <dbReference type="Rhea" id="RHEA:12340"/>
        <dbReference type="Rhea" id="RHEA-COMP:9613"/>
        <dbReference type="Rhea" id="RHEA-COMP:9622"/>
        <dbReference type="Rhea" id="RHEA-COMP:12670"/>
        <dbReference type="Rhea" id="RHEA-COMP:12671"/>
        <dbReference type="ChEBI" id="CHEBI:15378"/>
        <dbReference type="ChEBI" id="CHEBI:65249"/>
        <dbReference type="ChEBI" id="CHEBI:78442"/>
        <dbReference type="ChEBI" id="CHEBI:78494"/>
        <dbReference type="ChEBI" id="CHEBI:133043"/>
        <dbReference type="EC" id="2.3.2.6"/>
    </reaction>
</comment>
<comment type="catalytic activity">
    <reaction evidence="1">
        <text>N-terminal L-arginyl-[protein] + L-leucyl-tRNA(Leu) = N-terminal L-leucyl-L-arginyl-[protein] + tRNA(Leu) + H(+)</text>
        <dbReference type="Rhea" id="RHEA:50416"/>
        <dbReference type="Rhea" id="RHEA-COMP:9613"/>
        <dbReference type="Rhea" id="RHEA-COMP:9622"/>
        <dbReference type="Rhea" id="RHEA-COMP:12672"/>
        <dbReference type="Rhea" id="RHEA-COMP:12673"/>
        <dbReference type="ChEBI" id="CHEBI:15378"/>
        <dbReference type="ChEBI" id="CHEBI:64719"/>
        <dbReference type="ChEBI" id="CHEBI:78442"/>
        <dbReference type="ChEBI" id="CHEBI:78494"/>
        <dbReference type="ChEBI" id="CHEBI:133044"/>
        <dbReference type="EC" id="2.3.2.6"/>
    </reaction>
</comment>
<comment type="catalytic activity">
    <reaction evidence="1">
        <text>L-phenylalanyl-tRNA(Phe) + an N-terminal L-alpha-aminoacyl-[protein] = an N-terminal L-phenylalanyl-L-alpha-aminoacyl-[protein] + tRNA(Phe)</text>
        <dbReference type="Rhea" id="RHEA:43632"/>
        <dbReference type="Rhea" id="RHEA-COMP:9668"/>
        <dbReference type="Rhea" id="RHEA-COMP:9699"/>
        <dbReference type="Rhea" id="RHEA-COMP:10636"/>
        <dbReference type="Rhea" id="RHEA-COMP:10637"/>
        <dbReference type="ChEBI" id="CHEBI:78442"/>
        <dbReference type="ChEBI" id="CHEBI:78531"/>
        <dbReference type="ChEBI" id="CHEBI:78597"/>
        <dbReference type="ChEBI" id="CHEBI:83561"/>
        <dbReference type="EC" id="2.3.2.6"/>
    </reaction>
</comment>
<comment type="subcellular location">
    <subcellularLocation>
        <location evidence="1">Cytoplasm</location>
    </subcellularLocation>
</comment>
<comment type="similarity">
    <text evidence="1">Belongs to the L/F-transferase family.</text>
</comment>
<organism>
    <name type="scientific">Ruegeria sp. (strain TM1040)</name>
    <name type="common">Silicibacter sp.</name>
    <dbReference type="NCBI Taxonomy" id="292414"/>
    <lineage>
        <taxon>Bacteria</taxon>
        <taxon>Pseudomonadati</taxon>
        <taxon>Pseudomonadota</taxon>
        <taxon>Alphaproteobacteria</taxon>
        <taxon>Rhodobacterales</taxon>
        <taxon>Roseobacteraceae</taxon>
        <taxon>Ruegeria</taxon>
    </lineage>
</organism>
<proteinExistence type="inferred from homology"/>
<protein>
    <recommendedName>
        <fullName evidence="1">Leucyl/phenylalanyl-tRNA--protein transferase</fullName>
        <ecNumber evidence="1">2.3.2.6</ecNumber>
    </recommendedName>
    <alternativeName>
        <fullName evidence="1">L/F-transferase</fullName>
    </alternativeName>
    <alternativeName>
        <fullName evidence="1">Leucyltransferase</fullName>
    </alternativeName>
    <alternativeName>
        <fullName evidence="1">Phenyalanyltransferase</fullName>
    </alternativeName>
</protein>
<sequence>MTLSADLLLHAYANGVFPMAESRDDPEVFWVDPKRRGILPLDGFRISRSLAKRLRRDDYSISVNRDFAGVVQGCADREETWINGEIFDRYQELHHDGFAHSLEVWMDDALVGGVYGVSLGGAFFGESMFSRRRDASKIALAYLVDRLNAGGYILCDTQFITPHLASLGGREISRAAYRRRLAEALDQPGDFISPALPSPQVLLQRRTQTS</sequence>
<accession>Q1GGG4</accession>
<feature type="chain" id="PRO_0000258102" description="Leucyl/phenylalanyl-tRNA--protein transferase">
    <location>
        <begin position="1"/>
        <end position="210"/>
    </location>
</feature>
<dbReference type="EC" id="2.3.2.6" evidence="1"/>
<dbReference type="EMBL" id="CP000377">
    <property type="protein sequence ID" value="ABF64252.1"/>
    <property type="molecule type" value="Genomic_DNA"/>
</dbReference>
<dbReference type="RefSeq" id="WP_011538853.1">
    <property type="nucleotide sequence ID" value="NC_008044.1"/>
</dbReference>
<dbReference type="SMR" id="Q1GGG4"/>
<dbReference type="STRING" id="292414.TM1040_1519"/>
<dbReference type="KEGG" id="sit:TM1040_1519"/>
<dbReference type="eggNOG" id="COG2360">
    <property type="taxonomic scope" value="Bacteria"/>
</dbReference>
<dbReference type="HOGENOM" id="CLU_075045_1_1_5"/>
<dbReference type="OrthoDB" id="9790282at2"/>
<dbReference type="Proteomes" id="UP000000636">
    <property type="component" value="Chromosome"/>
</dbReference>
<dbReference type="GO" id="GO:0005737">
    <property type="term" value="C:cytoplasm"/>
    <property type="evidence" value="ECO:0007669"/>
    <property type="project" value="UniProtKB-SubCell"/>
</dbReference>
<dbReference type="GO" id="GO:0008914">
    <property type="term" value="F:leucyl-tRNA--protein transferase activity"/>
    <property type="evidence" value="ECO:0007669"/>
    <property type="project" value="UniProtKB-UniRule"/>
</dbReference>
<dbReference type="GO" id="GO:0030163">
    <property type="term" value="P:protein catabolic process"/>
    <property type="evidence" value="ECO:0007669"/>
    <property type="project" value="UniProtKB-UniRule"/>
</dbReference>
<dbReference type="Gene3D" id="3.40.630.70">
    <property type="entry name" value="Leucyl/phenylalanyl-tRNA-protein transferase, C-terminal domain"/>
    <property type="match status" value="1"/>
</dbReference>
<dbReference type="HAMAP" id="MF_00688">
    <property type="entry name" value="Leu_Phe_trans"/>
    <property type="match status" value="1"/>
</dbReference>
<dbReference type="InterPro" id="IPR016181">
    <property type="entry name" value="Acyl_CoA_acyltransferase"/>
</dbReference>
<dbReference type="InterPro" id="IPR004616">
    <property type="entry name" value="Leu/Phe-tRNA_Trfase"/>
</dbReference>
<dbReference type="InterPro" id="IPR042203">
    <property type="entry name" value="Leu/Phe-tRNA_Trfase_C"/>
</dbReference>
<dbReference type="NCBIfam" id="TIGR00667">
    <property type="entry name" value="aat"/>
    <property type="match status" value="1"/>
</dbReference>
<dbReference type="PANTHER" id="PTHR30098">
    <property type="entry name" value="LEUCYL/PHENYLALANYL-TRNA--PROTEIN TRANSFERASE"/>
    <property type="match status" value="1"/>
</dbReference>
<dbReference type="PANTHER" id="PTHR30098:SF2">
    <property type="entry name" value="LEUCYL_PHENYLALANYL-TRNA--PROTEIN TRANSFERASE"/>
    <property type="match status" value="1"/>
</dbReference>
<dbReference type="Pfam" id="PF03588">
    <property type="entry name" value="Leu_Phe_trans"/>
    <property type="match status" value="1"/>
</dbReference>
<dbReference type="SUPFAM" id="SSF55729">
    <property type="entry name" value="Acyl-CoA N-acyltransferases (Nat)"/>
    <property type="match status" value="1"/>
</dbReference>